<sequence length="163" mass="18848">MAFDYVRAAKYFVLWDFIKGFALGMKYFVAPKPTLNYPHEKGPLSPRFRGEHALRRYPSGEERCIACKLCEAICPAQAITIDAEPRDDGSRRTTRYDIDMTKCIYCGYCQEACPVDAIVEGPNFEYATETREELFYTKEKLLENGARWEAEIARNIEMDAPYR</sequence>
<evidence type="ECO:0000250" key="1"/>
<evidence type="ECO:0000305" key="2"/>
<gene>
    <name type="primary">nuoI</name>
    <name type="synonym">ndhI</name>
</gene>
<comment type="function">
    <text>NDH-1 shuttles electrons from NADH, via FMN and iron-sulfur (Fe-S) centers, to quinones in the respiratory chain. The immediate electron acceptor for the enzyme in this species is believed to be ubiquinone. Couples the redox reaction to proton translocation (for every two electrons transferred, four hydrogen ions are translocated across the cytoplasmic membrane), and thus conserves the redox energy in a proton gradient.</text>
</comment>
<comment type="catalytic activity">
    <reaction>
        <text>a quinone + NADH + 5 H(+)(in) = a quinol + NAD(+) + 4 H(+)(out)</text>
        <dbReference type="Rhea" id="RHEA:57888"/>
        <dbReference type="ChEBI" id="CHEBI:15378"/>
        <dbReference type="ChEBI" id="CHEBI:24646"/>
        <dbReference type="ChEBI" id="CHEBI:57540"/>
        <dbReference type="ChEBI" id="CHEBI:57945"/>
        <dbReference type="ChEBI" id="CHEBI:132124"/>
    </reaction>
</comment>
<comment type="cofactor">
    <cofactor evidence="1">
        <name>[4Fe-4S] cluster</name>
        <dbReference type="ChEBI" id="CHEBI:49883"/>
    </cofactor>
    <text evidence="1">Binds 2 [4Fe-4S] clusters per subunit.</text>
</comment>
<comment type="subunit">
    <text evidence="1">NDH-1 is composed of 14 different subunits. Subunits NuoA, H, J, K, L, M, N constitute the membrane sector of the complex (By similarity).</text>
</comment>
<comment type="subcellular location">
    <subcellularLocation>
        <location evidence="2">Cell inner membrane</location>
        <topology evidence="2">Peripheral membrane protein</topology>
    </subcellularLocation>
</comment>
<comment type="similarity">
    <text evidence="2">Belongs to the complex I 23 kDa subunit family.</text>
</comment>
<accession>P42031</accession>
<dbReference type="EC" id="7.1.1.-"/>
<dbReference type="EMBL" id="AF029365">
    <property type="protein sequence ID" value="AAC24999.1"/>
    <property type="molecule type" value="Genomic_DNA"/>
</dbReference>
<dbReference type="PIR" id="S22370">
    <property type="entry name" value="S22370"/>
</dbReference>
<dbReference type="RefSeq" id="WP_013067255.1">
    <property type="nucleotide sequence ID" value="NZ_VIBE01000008.1"/>
</dbReference>
<dbReference type="SMR" id="P42031"/>
<dbReference type="GeneID" id="31490411"/>
<dbReference type="OMA" id="WYPDFFR"/>
<dbReference type="GO" id="GO:0005886">
    <property type="term" value="C:plasma membrane"/>
    <property type="evidence" value="ECO:0007669"/>
    <property type="project" value="UniProtKB-SubCell"/>
</dbReference>
<dbReference type="GO" id="GO:0051539">
    <property type="term" value="F:4 iron, 4 sulfur cluster binding"/>
    <property type="evidence" value="ECO:0007669"/>
    <property type="project" value="UniProtKB-KW"/>
</dbReference>
<dbReference type="GO" id="GO:0005506">
    <property type="term" value="F:iron ion binding"/>
    <property type="evidence" value="ECO:0007669"/>
    <property type="project" value="UniProtKB-UniRule"/>
</dbReference>
<dbReference type="GO" id="GO:0050136">
    <property type="term" value="F:NADH:ubiquinone reductase (non-electrogenic) activity"/>
    <property type="evidence" value="ECO:0007669"/>
    <property type="project" value="UniProtKB-UniRule"/>
</dbReference>
<dbReference type="GO" id="GO:0048038">
    <property type="term" value="F:quinone binding"/>
    <property type="evidence" value="ECO:0007669"/>
    <property type="project" value="UniProtKB-KW"/>
</dbReference>
<dbReference type="GO" id="GO:0009060">
    <property type="term" value="P:aerobic respiration"/>
    <property type="evidence" value="ECO:0007669"/>
    <property type="project" value="TreeGrafter"/>
</dbReference>
<dbReference type="FunFam" id="3.30.70.3270:FF:000001">
    <property type="entry name" value="NADH-quinone oxidoreductase subunit I 1"/>
    <property type="match status" value="1"/>
</dbReference>
<dbReference type="Gene3D" id="3.30.70.3270">
    <property type="match status" value="1"/>
</dbReference>
<dbReference type="HAMAP" id="MF_01351">
    <property type="entry name" value="NDH1_NuoI"/>
    <property type="match status" value="1"/>
</dbReference>
<dbReference type="InterPro" id="IPR017896">
    <property type="entry name" value="4Fe4S_Fe-S-bd"/>
</dbReference>
<dbReference type="InterPro" id="IPR017900">
    <property type="entry name" value="4Fe4S_Fe_S_CS"/>
</dbReference>
<dbReference type="InterPro" id="IPR010226">
    <property type="entry name" value="NADH_quinone_OxRdtase_chainI"/>
</dbReference>
<dbReference type="NCBIfam" id="TIGR01971">
    <property type="entry name" value="NuoI"/>
    <property type="match status" value="1"/>
</dbReference>
<dbReference type="NCBIfam" id="NF004538">
    <property type="entry name" value="PRK05888.1-4"/>
    <property type="match status" value="1"/>
</dbReference>
<dbReference type="NCBIfam" id="NF004539">
    <property type="entry name" value="PRK05888.1-5"/>
    <property type="match status" value="1"/>
</dbReference>
<dbReference type="PANTHER" id="PTHR10849:SF20">
    <property type="entry name" value="NADH DEHYDROGENASE [UBIQUINONE] IRON-SULFUR PROTEIN 8, MITOCHONDRIAL"/>
    <property type="match status" value="1"/>
</dbReference>
<dbReference type="PANTHER" id="PTHR10849">
    <property type="entry name" value="NADH DEHYDROGENASE UBIQUINONE IRON-SULFUR PROTEIN 8, MITOCHONDRIAL"/>
    <property type="match status" value="1"/>
</dbReference>
<dbReference type="Pfam" id="PF12838">
    <property type="entry name" value="Fer4_7"/>
    <property type="match status" value="1"/>
</dbReference>
<dbReference type="SUPFAM" id="SSF54862">
    <property type="entry name" value="4Fe-4S ferredoxins"/>
    <property type="match status" value="1"/>
</dbReference>
<dbReference type="PROSITE" id="PS00198">
    <property type="entry name" value="4FE4S_FER_1"/>
    <property type="match status" value="2"/>
</dbReference>
<dbReference type="PROSITE" id="PS51379">
    <property type="entry name" value="4FE4S_FER_2"/>
    <property type="match status" value="2"/>
</dbReference>
<keyword id="KW-0004">4Fe-4S</keyword>
<keyword id="KW-0997">Cell inner membrane</keyword>
<keyword id="KW-1003">Cell membrane</keyword>
<keyword id="KW-0408">Iron</keyword>
<keyword id="KW-0411">Iron-sulfur</keyword>
<keyword id="KW-0472">Membrane</keyword>
<keyword id="KW-0479">Metal-binding</keyword>
<keyword id="KW-0520">NAD</keyword>
<keyword id="KW-0874">Quinone</keyword>
<keyword id="KW-0677">Repeat</keyword>
<keyword id="KW-1278">Translocase</keyword>
<keyword id="KW-0830">Ubiquinone</keyword>
<feature type="chain" id="PRO_0000118730" description="NADH-quinone oxidoreductase subunit I">
    <location>
        <begin position="1"/>
        <end position="163"/>
    </location>
</feature>
<feature type="domain" description="4Fe-4S ferredoxin-type 1">
    <location>
        <begin position="55"/>
        <end position="84"/>
    </location>
</feature>
<feature type="domain" description="4Fe-4S ferredoxin-type 2">
    <location>
        <begin position="94"/>
        <end position="123"/>
    </location>
</feature>
<feature type="binding site" evidence="1">
    <location>
        <position position="64"/>
    </location>
    <ligand>
        <name>[4Fe-4S] cluster</name>
        <dbReference type="ChEBI" id="CHEBI:49883"/>
        <label>1</label>
    </ligand>
</feature>
<feature type="binding site" evidence="1">
    <location>
        <position position="67"/>
    </location>
    <ligand>
        <name>[4Fe-4S] cluster</name>
        <dbReference type="ChEBI" id="CHEBI:49883"/>
        <label>1</label>
    </ligand>
</feature>
<feature type="binding site" evidence="1">
    <location>
        <position position="70"/>
    </location>
    <ligand>
        <name>[4Fe-4S] cluster</name>
        <dbReference type="ChEBI" id="CHEBI:49883"/>
        <label>1</label>
    </ligand>
</feature>
<feature type="binding site" evidence="1">
    <location>
        <position position="74"/>
    </location>
    <ligand>
        <name>[4Fe-4S] cluster</name>
        <dbReference type="ChEBI" id="CHEBI:49883"/>
        <label>2</label>
    </ligand>
</feature>
<feature type="binding site" evidence="1">
    <location>
        <position position="103"/>
    </location>
    <ligand>
        <name>[4Fe-4S] cluster</name>
        <dbReference type="ChEBI" id="CHEBI:49883"/>
        <label>2</label>
    </ligand>
</feature>
<feature type="binding site" evidence="1">
    <location>
        <position position="106"/>
    </location>
    <ligand>
        <name>[4Fe-4S] cluster</name>
        <dbReference type="ChEBI" id="CHEBI:49883"/>
        <label>2</label>
    </ligand>
</feature>
<feature type="binding site" evidence="1">
    <location>
        <position position="109"/>
    </location>
    <ligand>
        <name>[4Fe-4S] cluster</name>
        <dbReference type="ChEBI" id="CHEBI:49883"/>
        <label>2</label>
    </ligand>
</feature>
<feature type="binding site" evidence="1">
    <location>
        <position position="113"/>
    </location>
    <ligand>
        <name>[4Fe-4S] cluster</name>
        <dbReference type="ChEBI" id="CHEBI:49883"/>
        <label>1</label>
    </ligand>
</feature>
<protein>
    <recommendedName>
        <fullName>NADH-quinone oxidoreductase subunit I</fullName>
        <ecNumber>7.1.1.-</ecNumber>
    </recommendedName>
    <alternativeName>
        <fullName>NADH dehydrogenase I subunit I</fullName>
    </alternativeName>
    <alternativeName>
        <fullName>NDH-1 subunit I</fullName>
    </alternativeName>
</protein>
<proteinExistence type="inferred from homology"/>
<organism>
    <name type="scientific">Rhodobacter capsulatus</name>
    <name type="common">Rhodopseudomonas capsulata</name>
    <dbReference type="NCBI Taxonomy" id="1061"/>
    <lineage>
        <taxon>Bacteria</taxon>
        <taxon>Pseudomonadati</taxon>
        <taxon>Pseudomonadota</taxon>
        <taxon>Alphaproteobacteria</taxon>
        <taxon>Rhodobacterales</taxon>
        <taxon>Rhodobacter group</taxon>
        <taxon>Rhodobacter</taxon>
    </lineage>
</organism>
<name>NUOI_RHOCA</name>
<reference key="1">
    <citation type="journal article" date="1992" name="FEBS Lett.">
        <title>Identification of two genes of Rhodobacter capsulatus coding for proteins homologous to the ND1 and 23 kDa subunits of the mitochondrial Complex I.</title>
        <authorList>
            <person name="Dupuis A."/>
        </authorList>
    </citation>
    <scope>NUCLEOTIDE SEQUENCE [GENOMIC DNA]</scope>
    <source>
        <strain>ATCC 33303 / B10</strain>
    </source>
</reference>